<name>PYRR_SYNFM</name>
<reference key="1">
    <citation type="submission" date="2006-10" db="EMBL/GenBank/DDBJ databases">
        <title>Complete sequence of Syntrophobacter fumaroxidans MPOB.</title>
        <authorList>
            <consortium name="US DOE Joint Genome Institute"/>
            <person name="Copeland A."/>
            <person name="Lucas S."/>
            <person name="Lapidus A."/>
            <person name="Barry K."/>
            <person name="Detter J.C."/>
            <person name="Glavina del Rio T."/>
            <person name="Hammon N."/>
            <person name="Israni S."/>
            <person name="Pitluck S."/>
            <person name="Goltsman E.G."/>
            <person name="Martinez M."/>
            <person name="Schmutz J."/>
            <person name="Larimer F."/>
            <person name="Land M."/>
            <person name="Hauser L."/>
            <person name="Kyrpides N."/>
            <person name="Kim E."/>
            <person name="Boone D.R."/>
            <person name="Brockman F."/>
            <person name="Culley D."/>
            <person name="Ferry J."/>
            <person name="Gunsalus R."/>
            <person name="McInerney M.J."/>
            <person name="Morrison M."/>
            <person name="Plugge C."/>
            <person name="Rohlin L."/>
            <person name="Scholten J."/>
            <person name="Sieber J."/>
            <person name="Stams A.J.M."/>
            <person name="Worm P."/>
            <person name="Henstra A.M."/>
            <person name="Richardson P."/>
        </authorList>
    </citation>
    <scope>NUCLEOTIDE SEQUENCE [LARGE SCALE GENOMIC DNA]</scope>
    <source>
        <strain>DSM 10017 / MPOB</strain>
    </source>
</reference>
<comment type="function">
    <text evidence="1">Regulates the transcription of the pyrimidine nucleotide (pyr) operon in response to exogenous pyrimidines.</text>
</comment>
<comment type="function">
    <text evidence="1">Also displays a weak uracil phosphoribosyltransferase activity which is not physiologically significant.</text>
</comment>
<comment type="catalytic activity">
    <reaction evidence="1">
        <text>UMP + diphosphate = 5-phospho-alpha-D-ribose 1-diphosphate + uracil</text>
        <dbReference type="Rhea" id="RHEA:13017"/>
        <dbReference type="ChEBI" id="CHEBI:17568"/>
        <dbReference type="ChEBI" id="CHEBI:33019"/>
        <dbReference type="ChEBI" id="CHEBI:57865"/>
        <dbReference type="ChEBI" id="CHEBI:58017"/>
        <dbReference type="EC" id="2.4.2.9"/>
    </reaction>
</comment>
<comment type="similarity">
    <text evidence="1">Belongs to the purine/pyrimidine phosphoribosyltransferase family. PyrR subfamily.</text>
</comment>
<feature type="chain" id="PRO_1000053880" description="Bifunctional protein PyrR">
    <location>
        <begin position="1"/>
        <end position="186"/>
    </location>
</feature>
<feature type="short sequence motif" description="PRPP-binding" evidence="1">
    <location>
        <begin position="101"/>
        <end position="113"/>
    </location>
</feature>
<sequence>MVENGSRVVMEARDIRSALERLAREIVEQPVDPNGLALVGIHTGGVFLAKRLETLISKKLKHSIPVGTLDITLYRDDWTRLHTQPVVRATNLPFPMDDRDVVLVDDVLYTGRTIRAALDALIDYGRPKRVQVAALVDRGHRELPICGQFIGIELKTRSDEQVNVLLKEKDGVDRVVIEQAAQARKA</sequence>
<organism>
    <name type="scientific">Syntrophobacter fumaroxidans (strain DSM 10017 / MPOB)</name>
    <dbReference type="NCBI Taxonomy" id="335543"/>
    <lineage>
        <taxon>Bacteria</taxon>
        <taxon>Pseudomonadati</taxon>
        <taxon>Thermodesulfobacteriota</taxon>
        <taxon>Syntrophobacteria</taxon>
        <taxon>Syntrophobacterales</taxon>
        <taxon>Syntrophobacteraceae</taxon>
        <taxon>Syntrophobacter</taxon>
    </lineage>
</organism>
<accession>A0LH56</accession>
<gene>
    <name evidence="1" type="primary">pyrR</name>
    <name type="ordered locus">Sfum_1064</name>
</gene>
<dbReference type="EC" id="2.4.2.9" evidence="1"/>
<dbReference type="EMBL" id="CP000478">
    <property type="protein sequence ID" value="ABK16758.1"/>
    <property type="molecule type" value="Genomic_DNA"/>
</dbReference>
<dbReference type="RefSeq" id="WP_011697929.1">
    <property type="nucleotide sequence ID" value="NC_008554.1"/>
</dbReference>
<dbReference type="SMR" id="A0LH56"/>
<dbReference type="STRING" id="335543.Sfum_1064"/>
<dbReference type="KEGG" id="sfu:Sfum_1064"/>
<dbReference type="eggNOG" id="COG2065">
    <property type="taxonomic scope" value="Bacteria"/>
</dbReference>
<dbReference type="HOGENOM" id="CLU_094234_2_1_7"/>
<dbReference type="InParanoid" id="A0LH56"/>
<dbReference type="OrthoDB" id="9802227at2"/>
<dbReference type="Proteomes" id="UP000001784">
    <property type="component" value="Chromosome"/>
</dbReference>
<dbReference type="GO" id="GO:0004845">
    <property type="term" value="F:uracil phosphoribosyltransferase activity"/>
    <property type="evidence" value="ECO:0007669"/>
    <property type="project" value="UniProtKB-UniRule"/>
</dbReference>
<dbReference type="GO" id="GO:0006355">
    <property type="term" value="P:regulation of DNA-templated transcription"/>
    <property type="evidence" value="ECO:0007669"/>
    <property type="project" value="UniProtKB-UniRule"/>
</dbReference>
<dbReference type="CDD" id="cd06223">
    <property type="entry name" value="PRTases_typeI"/>
    <property type="match status" value="1"/>
</dbReference>
<dbReference type="FunFam" id="3.40.50.2020:FF:000020">
    <property type="entry name" value="Bifunctional protein PyrR"/>
    <property type="match status" value="1"/>
</dbReference>
<dbReference type="Gene3D" id="3.40.50.2020">
    <property type="match status" value="1"/>
</dbReference>
<dbReference type="HAMAP" id="MF_01219">
    <property type="entry name" value="PyrR"/>
    <property type="match status" value="1"/>
</dbReference>
<dbReference type="InterPro" id="IPR000836">
    <property type="entry name" value="PRibTrfase_dom"/>
</dbReference>
<dbReference type="InterPro" id="IPR029057">
    <property type="entry name" value="PRTase-like"/>
</dbReference>
<dbReference type="InterPro" id="IPR023050">
    <property type="entry name" value="PyrR"/>
</dbReference>
<dbReference type="InterPro" id="IPR050137">
    <property type="entry name" value="PyrR_bifunctional"/>
</dbReference>
<dbReference type="NCBIfam" id="NF003545">
    <property type="entry name" value="PRK05205.1-1"/>
    <property type="match status" value="1"/>
</dbReference>
<dbReference type="NCBIfam" id="NF003549">
    <property type="entry name" value="PRK05205.1-5"/>
    <property type="match status" value="1"/>
</dbReference>
<dbReference type="PANTHER" id="PTHR11608">
    <property type="entry name" value="BIFUNCTIONAL PROTEIN PYRR"/>
    <property type="match status" value="1"/>
</dbReference>
<dbReference type="PANTHER" id="PTHR11608:SF0">
    <property type="entry name" value="BIFUNCTIONAL PROTEIN PYRR"/>
    <property type="match status" value="1"/>
</dbReference>
<dbReference type="Pfam" id="PF00156">
    <property type="entry name" value="Pribosyltran"/>
    <property type="match status" value="1"/>
</dbReference>
<dbReference type="SUPFAM" id="SSF53271">
    <property type="entry name" value="PRTase-like"/>
    <property type="match status" value="1"/>
</dbReference>
<proteinExistence type="inferred from homology"/>
<keyword id="KW-0328">Glycosyltransferase</keyword>
<keyword id="KW-1185">Reference proteome</keyword>
<keyword id="KW-0804">Transcription</keyword>
<keyword id="KW-0805">Transcription regulation</keyword>
<keyword id="KW-0808">Transferase</keyword>
<protein>
    <recommendedName>
        <fullName evidence="1">Bifunctional protein PyrR</fullName>
    </recommendedName>
    <domain>
        <recommendedName>
            <fullName evidence="1">Pyrimidine operon regulatory protein</fullName>
        </recommendedName>
    </domain>
    <domain>
        <recommendedName>
            <fullName evidence="1">Uracil phosphoribosyltransferase</fullName>
            <shortName evidence="1">UPRTase</shortName>
            <ecNumber evidence="1">2.4.2.9</ecNumber>
        </recommendedName>
    </domain>
</protein>
<evidence type="ECO:0000255" key="1">
    <source>
        <dbReference type="HAMAP-Rule" id="MF_01219"/>
    </source>
</evidence>